<proteinExistence type="evidence at protein level"/>
<dbReference type="EMBL" id="AK077071">
    <property type="protein sequence ID" value="BAC36592.1"/>
    <property type="molecule type" value="mRNA"/>
</dbReference>
<dbReference type="EMBL" id="BC049744">
    <property type="protein sequence ID" value="AAH49744.1"/>
    <property type="molecule type" value="mRNA"/>
</dbReference>
<dbReference type="CCDS" id="CCDS20964.1"/>
<dbReference type="RefSeq" id="NP_001406195.1">
    <property type="nucleotide sequence ID" value="NM_001419266.1"/>
</dbReference>
<dbReference type="RefSeq" id="NP_877586.1">
    <property type="nucleotide sequence ID" value="NM_182785.4"/>
</dbReference>
<dbReference type="RefSeq" id="XP_011248819.1">
    <property type="nucleotide sequence ID" value="XM_011250517.2"/>
</dbReference>
<dbReference type="SMR" id="Q8BVP6"/>
<dbReference type="FunCoup" id="Q8BVP6">
    <property type="interactions" value="7"/>
</dbReference>
<dbReference type="STRING" id="10090.ENSMUSP00000078287"/>
<dbReference type="GlyCosmos" id="Q8BVP6">
    <property type="glycosylation" value="1 site, No reported glycans"/>
</dbReference>
<dbReference type="GlyGen" id="Q8BVP6">
    <property type="glycosylation" value="1 site"/>
</dbReference>
<dbReference type="PhosphoSitePlus" id="Q8BVP6"/>
<dbReference type="SwissPalm" id="Q8BVP6"/>
<dbReference type="PaxDb" id="10090-ENSMUSP00000078287"/>
<dbReference type="ProteomicsDB" id="252691"/>
<dbReference type="Antibodypedia" id="72432">
    <property type="antibodies" value="101 antibodies from 16 providers"/>
</dbReference>
<dbReference type="DNASU" id="232973"/>
<dbReference type="Ensembl" id="ENSMUST00000079306.11">
    <property type="protein sequence ID" value="ENSMUSP00000078287.5"/>
    <property type="gene ID" value="ENSMUSG00000062732.11"/>
</dbReference>
<dbReference type="GeneID" id="232973"/>
<dbReference type="KEGG" id="mmu:232973"/>
<dbReference type="UCSC" id="uc009fqo.1">
    <property type="organism name" value="mouse"/>
</dbReference>
<dbReference type="AGR" id="MGI:2687054"/>
<dbReference type="CTD" id="147719"/>
<dbReference type="MGI" id="MGI:2687054">
    <property type="gene designation" value="Lypd4"/>
</dbReference>
<dbReference type="VEuPathDB" id="HostDB:ENSMUSG00000062732"/>
<dbReference type="eggNOG" id="ENOG502RNFS">
    <property type="taxonomic scope" value="Eukaryota"/>
</dbReference>
<dbReference type="GeneTree" id="ENSGT00530000063351"/>
<dbReference type="HOGENOM" id="CLU_108759_0_0_1"/>
<dbReference type="InParanoid" id="Q8BVP6"/>
<dbReference type="OMA" id="CKLSEGC"/>
<dbReference type="OrthoDB" id="9522487at2759"/>
<dbReference type="PhylomeDB" id="Q8BVP6"/>
<dbReference type="TreeFam" id="TF337286"/>
<dbReference type="Reactome" id="R-MMU-163125">
    <property type="pathway name" value="Post-translational modification: synthesis of GPI-anchored proteins"/>
</dbReference>
<dbReference type="BioGRID-ORCS" id="232973">
    <property type="hits" value="3 hits in 76 CRISPR screens"/>
</dbReference>
<dbReference type="ChiTaRS" id="Lypd4">
    <property type="organism name" value="mouse"/>
</dbReference>
<dbReference type="PRO" id="PR:Q8BVP6"/>
<dbReference type="Proteomes" id="UP000000589">
    <property type="component" value="Chromosome 7"/>
</dbReference>
<dbReference type="RNAct" id="Q8BVP6">
    <property type="molecule type" value="protein"/>
</dbReference>
<dbReference type="Bgee" id="ENSMUSG00000062732">
    <property type="expression patterns" value="Expressed in seminiferous tubule of testis and 11 other cell types or tissues"/>
</dbReference>
<dbReference type="ExpressionAtlas" id="Q8BVP6">
    <property type="expression patterns" value="baseline and differential"/>
</dbReference>
<dbReference type="GO" id="GO:0001669">
    <property type="term" value="C:acrosomal vesicle"/>
    <property type="evidence" value="ECO:0000314"/>
    <property type="project" value="MGI"/>
</dbReference>
<dbReference type="GO" id="GO:0005886">
    <property type="term" value="C:plasma membrane"/>
    <property type="evidence" value="ECO:0007669"/>
    <property type="project" value="UniProtKB-SubCell"/>
</dbReference>
<dbReference type="GO" id="GO:0098552">
    <property type="term" value="C:side of membrane"/>
    <property type="evidence" value="ECO:0007669"/>
    <property type="project" value="UniProtKB-KW"/>
</dbReference>
<dbReference type="GO" id="GO:0007339">
    <property type="term" value="P:binding of sperm to zona pellucida"/>
    <property type="evidence" value="ECO:0000315"/>
    <property type="project" value="MGI"/>
</dbReference>
<dbReference type="GO" id="GO:0007338">
    <property type="term" value="P:single fertilization"/>
    <property type="evidence" value="ECO:0000315"/>
    <property type="project" value="MGI"/>
</dbReference>
<dbReference type="GO" id="GO:0160131">
    <property type="term" value="P:sperm migration through the uterotubal junction"/>
    <property type="evidence" value="ECO:0000315"/>
    <property type="project" value="MGI"/>
</dbReference>
<dbReference type="CDD" id="cd23621">
    <property type="entry name" value="TFP_LU_ECD_LYPD4_rpt1"/>
    <property type="match status" value="1"/>
</dbReference>
<dbReference type="CDD" id="cd23635">
    <property type="entry name" value="TFP_LU_ECD_LYPD4_rpt2"/>
    <property type="match status" value="1"/>
</dbReference>
<dbReference type="Gene3D" id="2.10.60.10">
    <property type="entry name" value="CD59"/>
    <property type="match status" value="1"/>
</dbReference>
<dbReference type="InterPro" id="IPR051899">
    <property type="entry name" value="Fert-Immune_med_protein"/>
</dbReference>
<dbReference type="InterPro" id="IPR016054">
    <property type="entry name" value="LY6_UPA_recep-like"/>
</dbReference>
<dbReference type="InterPro" id="IPR045860">
    <property type="entry name" value="Snake_toxin-like_sf"/>
</dbReference>
<dbReference type="PANTHER" id="PTHR16529">
    <property type="entry name" value="CD177 ANTIGEN"/>
    <property type="match status" value="1"/>
</dbReference>
<dbReference type="PANTHER" id="PTHR16529:SF9">
    <property type="entry name" value="LY6_PLAUR DOMAIN CONTAINING 10-RELATED"/>
    <property type="match status" value="1"/>
</dbReference>
<dbReference type="Pfam" id="PF00021">
    <property type="entry name" value="UPAR_LY6"/>
    <property type="match status" value="2"/>
</dbReference>
<dbReference type="SUPFAM" id="SSF57302">
    <property type="entry name" value="Snake toxin-like"/>
    <property type="match status" value="1"/>
</dbReference>
<protein>
    <recommendedName>
        <fullName>Ly6/PLAUR domain-containing protein 4</fullName>
    </recommendedName>
</protein>
<keyword id="KW-1003">Cell membrane</keyword>
<keyword id="KW-0325">Glycoprotein</keyword>
<keyword id="KW-0336">GPI-anchor</keyword>
<keyword id="KW-0449">Lipoprotein</keyword>
<keyword id="KW-0472">Membrane</keyword>
<keyword id="KW-1185">Reference proteome</keyword>
<keyword id="KW-0677">Repeat</keyword>
<keyword id="KW-0732">Signal</keyword>
<evidence type="ECO:0000255" key="1"/>
<evidence type="ECO:0000305" key="2"/>
<comment type="subcellular location">
    <subcellularLocation>
        <location evidence="2">Cell membrane</location>
        <topology evidence="2">Lipid-anchor</topology>
        <topology evidence="2">GPI-anchor</topology>
    </subcellularLocation>
</comment>
<sequence>MILQAWRSLQLLYLLEAISLLPCTEALLCYEATASAFRAVSLHNWKWLLLRSMVCNQREGCEETVVFIETGTSKGVLSFKGCSSAFSYPPQISYLVSPPGVSIASYSRVCRSYLCNNLTNLEPFVRLKASQPMSTLPSAKSCPSCVGKHDQECLPSFVTTENCPFAASSCYSSTLKFQAGNLNTTFLIMGCARDSHKLLADFQHIGSIRVTEVINVLDKSEAVSAGHCSQGISWSVLLCLLILLRD</sequence>
<organism>
    <name type="scientific">Mus musculus</name>
    <name type="common">Mouse</name>
    <dbReference type="NCBI Taxonomy" id="10090"/>
    <lineage>
        <taxon>Eukaryota</taxon>
        <taxon>Metazoa</taxon>
        <taxon>Chordata</taxon>
        <taxon>Craniata</taxon>
        <taxon>Vertebrata</taxon>
        <taxon>Euteleostomi</taxon>
        <taxon>Mammalia</taxon>
        <taxon>Eutheria</taxon>
        <taxon>Euarchontoglires</taxon>
        <taxon>Glires</taxon>
        <taxon>Rodentia</taxon>
        <taxon>Myomorpha</taxon>
        <taxon>Muroidea</taxon>
        <taxon>Muridae</taxon>
        <taxon>Murinae</taxon>
        <taxon>Mus</taxon>
        <taxon>Mus</taxon>
    </lineage>
</organism>
<name>LYPD4_MOUSE</name>
<gene>
    <name type="primary">Lypd4</name>
</gene>
<accession>Q8BVP6</accession>
<feature type="signal peptide" evidence="1">
    <location>
        <begin position="1"/>
        <end position="26"/>
    </location>
</feature>
<feature type="chain" id="PRO_0000226761" description="Ly6/PLAUR domain-containing protein 4">
    <location>
        <begin position="27"/>
        <end position="225"/>
    </location>
</feature>
<feature type="propeptide" id="PRO_0000226762" description="Removed in mature form" evidence="1">
    <location>
        <begin position="226"/>
        <end position="246"/>
    </location>
</feature>
<feature type="domain" description="UPAR/Ly6">
    <location>
        <begin position="142"/>
        <end position="223"/>
    </location>
</feature>
<feature type="lipid moiety-binding region" description="GPI-anchor amidated alanine" evidence="1">
    <location>
        <position position="225"/>
    </location>
</feature>
<feature type="glycosylation site" description="N-linked (GlcNAc...) asparagine" evidence="1">
    <location>
        <position position="117"/>
    </location>
</feature>
<reference key="1">
    <citation type="journal article" date="2005" name="Science">
        <title>The transcriptional landscape of the mammalian genome.</title>
        <authorList>
            <person name="Carninci P."/>
            <person name="Kasukawa T."/>
            <person name="Katayama S."/>
            <person name="Gough J."/>
            <person name="Frith M.C."/>
            <person name="Maeda N."/>
            <person name="Oyama R."/>
            <person name="Ravasi T."/>
            <person name="Lenhard B."/>
            <person name="Wells C."/>
            <person name="Kodzius R."/>
            <person name="Shimokawa K."/>
            <person name="Bajic V.B."/>
            <person name="Brenner S.E."/>
            <person name="Batalov S."/>
            <person name="Forrest A.R."/>
            <person name="Zavolan M."/>
            <person name="Davis M.J."/>
            <person name="Wilming L.G."/>
            <person name="Aidinis V."/>
            <person name="Allen J.E."/>
            <person name="Ambesi-Impiombato A."/>
            <person name="Apweiler R."/>
            <person name="Aturaliya R.N."/>
            <person name="Bailey T.L."/>
            <person name="Bansal M."/>
            <person name="Baxter L."/>
            <person name="Beisel K.W."/>
            <person name="Bersano T."/>
            <person name="Bono H."/>
            <person name="Chalk A.M."/>
            <person name="Chiu K.P."/>
            <person name="Choudhary V."/>
            <person name="Christoffels A."/>
            <person name="Clutterbuck D.R."/>
            <person name="Crowe M.L."/>
            <person name="Dalla E."/>
            <person name="Dalrymple B.P."/>
            <person name="de Bono B."/>
            <person name="Della Gatta G."/>
            <person name="di Bernardo D."/>
            <person name="Down T."/>
            <person name="Engstrom P."/>
            <person name="Fagiolini M."/>
            <person name="Faulkner G."/>
            <person name="Fletcher C.F."/>
            <person name="Fukushima T."/>
            <person name="Furuno M."/>
            <person name="Futaki S."/>
            <person name="Gariboldi M."/>
            <person name="Georgii-Hemming P."/>
            <person name="Gingeras T.R."/>
            <person name="Gojobori T."/>
            <person name="Green R.E."/>
            <person name="Gustincich S."/>
            <person name="Harbers M."/>
            <person name="Hayashi Y."/>
            <person name="Hensch T.K."/>
            <person name="Hirokawa N."/>
            <person name="Hill D."/>
            <person name="Huminiecki L."/>
            <person name="Iacono M."/>
            <person name="Ikeo K."/>
            <person name="Iwama A."/>
            <person name="Ishikawa T."/>
            <person name="Jakt M."/>
            <person name="Kanapin A."/>
            <person name="Katoh M."/>
            <person name="Kawasawa Y."/>
            <person name="Kelso J."/>
            <person name="Kitamura H."/>
            <person name="Kitano H."/>
            <person name="Kollias G."/>
            <person name="Krishnan S.P."/>
            <person name="Kruger A."/>
            <person name="Kummerfeld S.K."/>
            <person name="Kurochkin I.V."/>
            <person name="Lareau L.F."/>
            <person name="Lazarevic D."/>
            <person name="Lipovich L."/>
            <person name="Liu J."/>
            <person name="Liuni S."/>
            <person name="McWilliam S."/>
            <person name="Madan Babu M."/>
            <person name="Madera M."/>
            <person name="Marchionni L."/>
            <person name="Matsuda H."/>
            <person name="Matsuzawa S."/>
            <person name="Miki H."/>
            <person name="Mignone F."/>
            <person name="Miyake S."/>
            <person name="Morris K."/>
            <person name="Mottagui-Tabar S."/>
            <person name="Mulder N."/>
            <person name="Nakano N."/>
            <person name="Nakauchi H."/>
            <person name="Ng P."/>
            <person name="Nilsson R."/>
            <person name="Nishiguchi S."/>
            <person name="Nishikawa S."/>
            <person name="Nori F."/>
            <person name="Ohara O."/>
            <person name="Okazaki Y."/>
            <person name="Orlando V."/>
            <person name="Pang K.C."/>
            <person name="Pavan W.J."/>
            <person name="Pavesi G."/>
            <person name="Pesole G."/>
            <person name="Petrovsky N."/>
            <person name="Piazza S."/>
            <person name="Reed J."/>
            <person name="Reid J.F."/>
            <person name="Ring B.Z."/>
            <person name="Ringwald M."/>
            <person name="Rost B."/>
            <person name="Ruan Y."/>
            <person name="Salzberg S.L."/>
            <person name="Sandelin A."/>
            <person name="Schneider C."/>
            <person name="Schoenbach C."/>
            <person name="Sekiguchi K."/>
            <person name="Semple C.A."/>
            <person name="Seno S."/>
            <person name="Sessa L."/>
            <person name="Sheng Y."/>
            <person name="Shibata Y."/>
            <person name="Shimada H."/>
            <person name="Shimada K."/>
            <person name="Silva D."/>
            <person name="Sinclair B."/>
            <person name="Sperling S."/>
            <person name="Stupka E."/>
            <person name="Sugiura K."/>
            <person name="Sultana R."/>
            <person name="Takenaka Y."/>
            <person name="Taki K."/>
            <person name="Tammoja K."/>
            <person name="Tan S.L."/>
            <person name="Tang S."/>
            <person name="Taylor M.S."/>
            <person name="Tegner J."/>
            <person name="Teichmann S.A."/>
            <person name="Ueda H.R."/>
            <person name="van Nimwegen E."/>
            <person name="Verardo R."/>
            <person name="Wei C.L."/>
            <person name="Yagi K."/>
            <person name="Yamanishi H."/>
            <person name="Zabarovsky E."/>
            <person name="Zhu S."/>
            <person name="Zimmer A."/>
            <person name="Hide W."/>
            <person name="Bult C."/>
            <person name="Grimmond S.M."/>
            <person name="Teasdale R.D."/>
            <person name="Liu E.T."/>
            <person name="Brusic V."/>
            <person name="Quackenbush J."/>
            <person name="Wahlestedt C."/>
            <person name="Mattick J.S."/>
            <person name="Hume D.A."/>
            <person name="Kai C."/>
            <person name="Sasaki D."/>
            <person name="Tomaru Y."/>
            <person name="Fukuda S."/>
            <person name="Kanamori-Katayama M."/>
            <person name="Suzuki M."/>
            <person name="Aoki J."/>
            <person name="Arakawa T."/>
            <person name="Iida J."/>
            <person name="Imamura K."/>
            <person name="Itoh M."/>
            <person name="Kato T."/>
            <person name="Kawaji H."/>
            <person name="Kawagashira N."/>
            <person name="Kawashima T."/>
            <person name="Kojima M."/>
            <person name="Kondo S."/>
            <person name="Konno H."/>
            <person name="Nakano K."/>
            <person name="Ninomiya N."/>
            <person name="Nishio T."/>
            <person name="Okada M."/>
            <person name="Plessy C."/>
            <person name="Shibata K."/>
            <person name="Shiraki T."/>
            <person name="Suzuki S."/>
            <person name="Tagami M."/>
            <person name="Waki K."/>
            <person name="Watahiki A."/>
            <person name="Okamura-Oho Y."/>
            <person name="Suzuki H."/>
            <person name="Kawai J."/>
            <person name="Hayashizaki Y."/>
        </authorList>
    </citation>
    <scope>NUCLEOTIDE SEQUENCE [LARGE SCALE MRNA]</scope>
    <source>
        <strain>C57BL/6J</strain>
        <tissue>Testis</tissue>
    </source>
</reference>
<reference key="2">
    <citation type="journal article" date="2004" name="Genome Res.">
        <title>The status, quality, and expansion of the NIH full-length cDNA project: the Mammalian Gene Collection (MGC).</title>
        <authorList>
            <consortium name="The MGC Project Team"/>
        </authorList>
    </citation>
    <scope>NUCLEOTIDE SEQUENCE [LARGE SCALE MRNA]</scope>
    <source>
        <tissue>Testis</tissue>
    </source>
</reference>
<reference key="3">
    <citation type="journal article" date="2010" name="Cell">
        <title>A tissue-specific atlas of mouse protein phosphorylation and expression.</title>
        <authorList>
            <person name="Huttlin E.L."/>
            <person name="Jedrychowski M.P."/>
            <person name="Elias J.E."/>
            <person name="Goswami T."/>
            <person name="Rad R."/>
            <person name="Beausoleil S.A."/>
            <person name="Villen J."/>
            <person name="Haas W."/>
            <person name="Sowa M.E."/>
            <person name="Gygi S.P."/>
        </authorList>
    </citation>
    <scope>IDENTIFICATION BY MASS SPECTROMETRY [LARGE SCALE ANALYSIS]</scope>
    <source>
        <tissue>Testis</tissue>
    </source>
</reference>